<name>YICR_ECOL6</name>
<keyword id="KW-0378">Hydrolase</keyword>
<keyword id="KW-0479">Metal-binding</keyword>
<keyword id="KW-0482">Metalloprotease</keyword>
<keyword id="KW-0645">Protease</keyword>
<keyword id="KW-1185">Reference proteome</keyword>
<keyword id="KW-0862">Zinc</keyword>
<evidence type="ECO:0000255" key="1">
    <source>
        <dbReference type="HAMAP-Rule" id="MF_00018"/>
    </source>
</evidence>
<evidence type="ECO:0000255" key="2">
    <source>
        <dbReference type="PROSITE-ProRule" id="PRU01182"/>
    </source>
</evidence>
<evidence type="ECO:0000305" key="3"/>
<comment type="similarity">
    <text evidence="1">Belongs to the UPF0758 family. YicR subfamily.</text>
</comment>
<comment type="sequence caution" evidence="3">
    <conflict type="erroneous initiation">
        <sequence resource="EMBL-CDS" id="AAN82898"/>
    </conflict>
</comment>
<feature type="chain" id="PRO_0000190695" description="UPF0758 protein YicR">
    <location>
        <begin position="1"/>
        <end position="222"/>
    </location>
</feature>
<feature type="domain" description="MPN" evidence="2">
    <location>
        <begin position="100"/>
        <end position="222"/>
    </location>
</feature>
<feature type="short sequence motif" description="JAMM motif" evidence="2">
    <location>
        <begin position="171"/>
        <end position="184"/>
    </location>
</feature>
<feature type="binding site" evidence="2">
    <location>
        <position position="171"/>
    </location>
    <ligand>
        <name>Zn(2+)</name>
        <dbReference type="ChEBI" id="CHEBI:29105"/>
        <note>catalytic</note>
    </ligand>
</feature>
<feature type="binding site" evidence="2">
    <location>
        <position position="173"/>
    </location>
    <ligand>
        <name>Zn(2+)</name>
        <dbReference type="ChEBI" id="CHEBI:29105"/>
        <note>catalytic</note>
    </ligand>
</feature>
<feature type="binding site" evidence="2">
    <location>
        <position position="184"/>
    </location>
    <ligand>
        <name>Zn(2+)</name>
        <dbReference type="ChEBI" id="CHEBI:29105"/>
        <note>catalytic</note>
    </ligand>
</feature>
<dbReference type="EMBL" id="AE014075">
    <property type="protein sequence ID" value="AAN82898.1"/>
    <property type="status" value="ALT_INIT"/>
    <property type="molecule type" value="Genomic_DNA"/>
</dbReference>
<dbReference type="SMR" id="P65957"/>
<dbReference type="STRING" id="199310.c4462"/>
<dbReference type="KEGG" id="ecc:c4462"/>
<dbReference type="eggNOG" id="COG2003">
    <property type="taxonomic scope" value="Bacteria"/>
</dbReference>
<dbReference type="HOGENOM" id="CLU_073529_0_2_6"/>
<dbReference type="Proteomes" id="UP000001410">
    <property type="component" value="Chromosome"/>
</dbReference>
<dbReference type="GO" id="GO:0046872">
    <property type="term" value="F:metal ion binding"/>
    <property type="evidence" value="ECO:0007669"/>
    <property type="project" value="UniProtKB-KW"/>
</dbReference>
<dbReference type="GO" id="GO:0008237">
    <property type="term" value="F:metallopeptidase activity"/>
    <property type="evidence" value="ECO:0007669"/>
    <property type="project" value="UniProtKB-KW"/>
</dbReference>
<dbReference type="GO" id="GO:0006508">
    <property type="term" value="P:proteolysis"/>
    <property type="evidence" value="ECO:0007669"/>
    <property type="project" value="UniProtKB-KW"/>
</dbReference>
<dbReference type="CDD" id="cd08071">
    <property type="entry name" value="MPN_DUF2466"/>
    <property type="match status" value="1"/>
</dbReference>
<dbReference type="Gene3D" id="3.40.140.10">
    <property type="entry name" value="Cytidine Deaminase, domain 2"/>
    <property type="match status" value="1"/>
</dbReference>
<dbReference type="HAMAP" id="MF_00018">
    <property type="entry name" value="UPF0758_YicR"/>
    <property type="match status" value="1"/>
</dbReference>
<dbReference type="InterPro" id="IPR037518">
    <property type="entry name" value="MPN"/>
</dbReference>
<dbReference type="InterPro" id="IPR025657">
    <property type="entry name" value="RadC_JAB"/>
</dbReference>
<dbReference type="InterPro" id="IPR010994">
    <property type="entry name" value="RuvA_2-like"/>
</dbReference>
<dbReference type="InterPro" id="IPR001405">
    <property type="entry name" value="UPF0758"/>
</dbReference>
<dbReference type="InterPro" id="IPR020891">
    <property type="entry name" value="UPF0758_CS"/>
</dbReference>
<dbReference type="InterPro" id="IPR046778">
    <property type="entry name" value="UPF0758_N"/>
</dbReference>
<dbReference type="InterPro" id="IPR022820">
    <property type="entry name" value="UPF0758_YicR"/>
</dbReference>
<dbReference type="NCBIfam" id="NF000642">
    <property type="entry name" value="PRK00024.1"/>
    <property type="match status" value="1"/>
</dbReference>
<dbReference type="NCBIfam" id="TIGR00608">
    <property type="entry name" value="radc"/>
    <property type="match status" value="1"/>
</dbReference>
<dbReference type="PANTHER" id="PTHR30471">
    <property type="entry name" value="DNA REPAIR PROTEIN RADC"/>
    <property type="match status" value="1"/>
</dbReference>
<dbReference type="PANTHER" id="PTHR30471:SF3">
    <property type="entry name" value="UPF0758 PROTEIN YEES-RELATED"/>
    <property type="match status" value="1"/>
</dbReference>
<dbReference type="Pfam" id="PF04002">
    <property type="entry name" value="RadC"/>
    <property type="match status" value="1"/>
</dbReference>
<dbReference type="Pfam" id="PF20582">
    <property type="entry name" value="UPF0758_N"/>
    <property type="match status" value="1"/>
</dbReference>
<dbReference type="SUPFAM" id="SSF47781">
    <property type="entry name" value="RuvA domain 2-like"/>
    <property type="match status" value="1"/>
</dbReference>
<dbReference type="PROSITE" id="PS50249">
    <property type="entry name" value="MPN"/>
    <property type="match status" value="1"/>
</dbReference>
<dbReference type="PROSITE" id="PS01302">
    <property type="entry name" value="UPF0758"/>
    <property type="match status" value="1"/>
</dbReference>
<organism>
    <name type="scientific">Escherichia coli O6:H1 (strain CFT073 / ATCC 700928 / UPEC)</name>
    <dbReference type="NCBI Taxonomy" id="199310"/>
    <lineage>
        <taxon>Bacteria</taxon>
        <taxon>Pseudomonadati</taxon>
        <taxon>Pseudomonadota</taxon>
        <taxon>Gammaproteobacteria</taxon>
        <taxon>Enterobacterales</taxon>
        <taxon>Enterobacteriaceae</taxon>
        <taxon>Escherichia</taxon>
    </lineage>
</organism>
<sequence length="222" mass="25258">MKNNAQLLMPREKMLKFGISALTDVELLALFLRTGTRGKDVLTLAKEMLENFGSLYGLLTSEYEQFSGVHGIGVAKFAQLKGIAELARRYYNVRMREESPLLSPEMTREFLQSQLTGEEREIFMVIFLDSQHRVITHSRLFSGTLNHVEVHPREIIREAIKINASALILAHNHPSGCAEPSKADKLITERIIKSCQFMDLRVLDHIVIGRGEYVSFAERGWI</sequence>
<gene>
    <name evidence="1" type="primary">yicR</name>
    <name type="ordered locus">c4462</name>
</gene>
<protein>
    <recommendedName>
        <fullName evidence="1">UPF0758 protein YicR</fullName>
    </recommendedName>
</protein>
<proteinExistence type="inferred from homology"/>
<reference key="1">
    <citation type="journal article" date="2002" name="Proc. Natl. Acad. Sci. U.S.A.">
        <title>Extensive mosaic structure revealed by the complete genome sequence of uropathogenic Escherichia coli.</title>
        <authorList>
            <person name="Welch R.A."/>
            <person name="Burland V."/>
            <person name="Plunkett G. III"/>
            <person name="Redford P."/>
            <person name="Roesch P."/>
            <person name="Rasko D."/>
            <person name="Buckles E.L."/>
            <person name="Liou S.-R."/>
            <person name="Boutin A."/>
            <person name="Hackett J."/>
            <person name="Stroud D."/>
            <person name="Mayhew G.F."/>
            <person name="Rose D.J."/>
            <person name="Zhou S."/>
            <person name="Schwartz D.C."/>
            <person name="Perna N.T."/>
            <person name="Mobley H.L.T."/>
            <person name="Donnenberg M.S."/>
            <person name="Blattner F.R."/>
        </authorList>
    </citation>
    <scope>NUCLEOTIDE SEQUENCE [LARGE SCALE GENOMIC DNA]</scope>
    <source>
        <strain>CFT073 / ATCC 700928 / UPEC</strain>
    </source>
</reference>
<accession>P65957</accession>
<accession>Q8XDA3</accession>